<name>DEFA_MYTED</name>
<comment type="function">
    <text>Has antibacterial activity against M.luteus and E.coli.</text>
</comment>
<comment type="subcellular location">
    <subcellularLocation>
        <location>Secreted</location>
    </subcellularLocation>
</comment>
<comment type="mass spectrometry" mass="4314.3" method="MALDI" evidence="2"/>
<comment type="similarity">
    <text evidence="1">Belongs to the invertebrate defensin family. Type 2 subfamily.</text>
</comment>
<keyword id="KW-0044">Antibiotic</keyword>
<keyword id="KW-0929">Antimicrobial</keyword>
<keyword id="KW-0211">Defensin</keyword>
<keyword id="KW-0903">Direct protein sequencing</keyword>
<keyword id="KW-1015">Disulfide bond</keyword>
<keyword id="KW-0964">Secreted</keyword>
<sequence length="37" mass="4151">GFGCPNDYPCHRHCKSIPGRXGGYCGGXHRLRCTCYR</sequence>
<feature type="peptide" id="PRO_0000044713" description="Defensin-A">
    <location>
        <begin position="1"/>
        <end position="37"/>
    </location>
</feature>
<feature type="disulfide bond" evidence="1">
    <location>
        <begin position="4"/>
        <end position="25"/>
    </location>
</feature>
<feature type="disulfide bond" evidence="1">
    <location>
        <begin position="10"/>
        <end position="33"/>
    </location>
</feature>
<feature type="disulfide bond" evidence="1">
    <location>
        <begin position="14"/>
        <end position="35"/>
    </location>
</feature>
<organism>
    <name type="scientific">Mytilus edulis</name>
    <name type="common">Blue mussel</name>
    <dbReference type="NCBI Taxonomy" id="6550"/>
    <lineage>
        <taxon>Eukaryota</taxon>
        <taxon>Metazoa</taxon>
        <taxon>Spiralia</taxon>
        <taxon>Lophotrochozoa</taxon>
        <taxon>Mollusca</taxon>
        <taxon>Bivalvia</taxon>
        <taxon>Autobranchia</taxon>
        <taxon>Pteriomorphia</taxon>
        <taxon>Mytilida</taxon>
        <taxon>Mytiloidea</taxon>
        <taxon>Mytilidae</taxon>
        <taxon>Mytilinae</taxon>
        <taxon>Mytilus</taxon>
    </lineage>
</organism>
<reference key="1">
    <citation type="journal article" date="1996" name="J. Biol. Chem.">
        <title>Innate immunity. Isolation of several cysteine-rich antimicrobial peptides from the blood of a mollusc, Mytilus edulis.</title>
        <authorList>
            <person name="Charlet M."/>
            <person name="Chernysh S."/>
            <person name="Philippe H."/>
            <person name="Hetru C."/>
            <person name="Hoffman J.A."/>
            <person name="Bulet P."/>
        </authorList>
    </citation>
    <scope>PROTEIN SEQUENCE</scope>
    <scope>CHARACTERIZATION</scope>
    <scope>MASS SPECTROMETRY</scope>
    <source>
        <tissue>Blood</tissue>
    </source>
</reference>
<accession>P81610</accession>
<dbReference type="TCDB" id="1.C.47.1.6">
    <property type="family name" value="the insect/fungal defensin (insect/fungal defensin) family"/>
</dbReference>
<dbReference type="GO" id="GO:0005576">
    <property type="term" value="C:extracellular region"/>
    <property type="evidence" value="ECO:0007669"/>
    <property type="project" value="UniProtKB-SubCell"/>
</dbReference>
<dbReference type="GO" id="GO:0042742">
    <property type="term" value="P:defense response to bacterium"/>
    <property type="evidence" value="ECO:0007669"/>
    <property type="project" value="UniProtKB-KW"/>
</dbReference>
<dbReference type="Gene3D" id="3.30.30.10">
    <property type="entry name" value="Knottin, scorpion toxin-like"/>
    <property type="match status" value="1"/>
</dbReference>
<dbReference type="InterPro" id="IPR001542">
    <property type="entry name" value="Defensin_invertebrate/fungal"/>
</dbReference>
<dbReference type="InterPro" id="IPR036574">
    <property type="entry name" value="Scorpion_toxin-like_sf"/>
</dbReference>
<dbReference type="Pfam" id="PF01097">
    <property type="entry name" value="Defensin_2"/>
    <property type="match status" value="1"/>
</dbReference>
<dbReference type="SUPFAM" id="SSF57095">
    <property type="entry name" value="Scorpion toxin-like"/>
    <property type="match status" value="1"/>
</dbReference>
<dbReference type="PROSITE" id="PS51378">
    <property type="entry name" value="INVERT_DEFENSINS"/>
    <property type="match status" value="1"/>
</dbReference>
<proteinExistence type="evidence at protein level"/>
<evidence type="ECO:0000255" key="1">
    <source>
        <dbReference type="PROSITE-ProRule" id="PRU00710"/>
    </source>
</evidence>
<evidence type="ECO:0000269" key="2">
    <source>
    </source>
</evidence>
<protein>
    <recommendedName>
        <fullName>Defensin-A</fullName>
    </recommendedName>
</protein>